<comment type="function">
    <text evidence="1">This protein is located at the 30S-50S ribosomal subunit interface and may play a role in the structure and function of the aminoacyl-tRNA binding site.</text>
</comment>
<comment type="similarity">
    <text evidence="1">Belongs to the bacterial ribosomal protein bL19 family.</text>
</comment>
<name>RL19_BRUO2</name>
<gene>
    <name evidence="1" type="primary">rplS</name>
    <name type="ordered locus">BOV_1835</name>
</gene>
<organism>
    <name type="scientific">Brucella ovis (strain ATCC 25840 / 63/290 / NCTC 10512)</name>
    <dbReference type="NCBI Taxonomy" id="444178"/>
    <lineage>
        <taxon>Bacteria</taxon>
        <taxon>Pseudomonadati</taxon>
        <taxon>Pseudomonadota</taxon>
        <taxon>Alphaproteobacteria</taxon>
        <taxon>Hyphomicrobiales</taxon>
        <taxon>Brucellaceae</taxon>
        <taxon>Brucella/Ochrobactrum group</taxon>
        <taxon>Brucella</taxon>
    </lineage>
</organism>
<dbReference type="EMBL" id="CP000708">
    <property type="protein sequence ID" value="ABQ60592.1"/>
    <property type="molecule type" value="Genomic_DNA"/>
</dbReference>
<dbReference type="RefSeq" id="WP_002964975.1">
    <property type="nucleotide sequence ID" value="NC_009505.1"/>
</dbReference>
<dbReference type="SMR" id="A5VSN4"/>
<dbReference type="GeneID" id="97534805"/>
<dbReference type="KEGG" id="bov:BOV_1835"/>
<dbReference type="HOGENOM" id="CLU_103507_0_2_5"/>
<dbReference type="PhylomeDB" id="A5VSN4"/>
<dbReference type="PRO" id="PR:A5VSN4"/>
<dbReference type="Proteomes" id="UP000006383">
    <property type="component" value="Chromosome I"/>
</dbReference>
<dbReference type="GO" id="GO:0022625">
    <property type="term" value="C:cytosolic large ribosomal subunit"/>
    <property type="evidence" value="ECO:0007669"/>
    <property type="project" value="TreeGrafter"/>
</dbReference>
<dbReference type="GO" id="GO:0003735">
    <property type="term" value="F:structural constituent of ribosome"/>
    <property type="evidence" value="ECO:0007669"/>
    <property type="project" value="InterPro"/>
</dbReference>
<dbReference type="GO" id="GO:0006412">
    <property type="term" value="P:translation"/>
    <property type="evidence" value="ECO:0007669"/>
    <property type="project" value="UniProtKB-UniRule"/>
</dbReference>
<dbReference type="FunFam" id="2.30.30.790:FF:000001">
    <property type="entry name" value="50S ribosomal protein L19"/>
    <property type="match status" value="1"/>
</dbReference>
<dbReference type="Gene3D" id="2.30.30.790">
    <property type="match status" value="1"/>
</dbReference>
<dbReference type="HAMAP" id="MF_00402">
    <property type="entry name" value="Ribosomal_bL19"/>
    <property type="match status" value="1"/>
</dbReference>
<dbReference type="InterPro" id="IPR001857">
    <property type="entry name" value="Ribosomal_bL19"/>
</dbReference>
<dbReference type="InterPro" id="IPR018257">
    <property type="entry name" value="Ribosomal_bL19_CS"/>
</dbReference>
<dbReference type="InterPro" id="IPR038657">
    <property type="entry name" value="Ribosomal_bL19_sf"/>
</dbReference>
<dbReference type="InterPro" id="IPR008991">
    <property type="entry name" value="Translation_prot_SH3-like_sf"/>
</dbReference>
<dbReference type="NCBIfam" id="TIGR01024">
    <property type="entry name" value="rplS_bact"/>
    <property type="match status" value="1"/>
</dbReference>
<dbReference type="PANTHER" id="PTHR15680:SF9">
    <property type="entry name" value="LARGE RIBOSOMAL SUBUNIT PROTEIN BL19M"/>
    <property type="match status" value="1"/>
</dbReference>
<dbReference type="PANTHER" id="PTHR15680">
    <property type="entry name" value="RIBOSOMAL PROTEIN L19"/>
    <property type="match status" value="1"/>
</dbReference>
<dbReference type="Pfam" id="PF01245">
    <property type="entry name" value="Ribosomal_L19"/>
    <property type="match status" value="1"/>
</dbReference>
<dbReference type="PIRSF" id="PIRSF002191">
    <property type="entry name" value="Ribosomal_L19"/>
    <property type="match status" value="1"/>
</dbReference>
<dbReference type="PRINTS" id="PR00061">
    <property type="entry name" value="RIBOSOMALL19"/>
</dbReference>
<dbReference type="SUPFAM" id="SSF50104">
    <property type="entry name" value="Translation proteins SH3-like domain"/>
    <property type="match status" value="1"/>
</dbReference>
<dbReference type="PROSITE" id="PS01015">
    <property type="entry name" value="RIBOSOMAL_L19"/>
    <property type="match status" value="1"/>
</dbReference>
<protein>
    <recommendedName>
        <fullName evidence="1">Large ribosomal subunit protein bL19</fullName>
    </recommendedName>
    <alternativeName>
        <fullName evidence="2">50S ribosomal protein L19</fullName>
    </alternativeName>
</protein>
<proteinExistence type="inferred from homology"/>
<reference key="1">
    <citation type="journal article" date="2009" name="PLoS ONE">
        <title>Genome degradation in Brucella ovis corresponds with narrowing of its host range and tissue tropism.</title>
        <authorList>
            <person name="Tsolis R.M."/>
            <person name="Seshadri R."/>
            <person name="Santos R.L."/>
            <person name="Sangari F.J."/>
            <person name="Lobo J.M."/>
            <person name="de Jong M.F."/>
            <person name="Ren Q."/>
            <person name="Myers G."/>
            <person name="Brinkac L.M."/>
            <person name="Nelson W.C."/>
            <person name="Deboy R.T."/>
            <person name="Angiuoli S."/>
            <person name="Khouri H."/>
            <person name="Dimitrov G."/>
            <person name="Robinson J.R."/>
            <person name="Mulligan S."/>
            <person name="Walker R.L."/>
            <person name="Elzer P.E."/>
            <person name="Hassan K.A."/>
            <person name="Paulsen I.T."/>
        </authorList>
    </citation>
    <scope>NUCLEOTIDE SEQUENCE [LARGE SCALE GENOMIC DNA]</scope>
    <source>
        <strain>ATCC 25840 / 63/290 / NCTC 10512</strain>
    </source>
</reference>
<sequence>MTDIIRQLEAEQAAKIEEKRKLPDFQPGDTVRVQVRVTEGTRTRVQAYEGVCIARSGAGLNENFTVRKISYGEGVERVFPVYSPIVEGVEVVRRGKVRRAKLYYLRGLTGKAARIAEKKDNRTKAERAADKLAAAKAEAAKTAAE</sequence>
<evidence type="ECO:0000255" key="1">
    <source>
        <dbReference type="HAMAP-Rule" id="MF_00402"/>
    </source>
</evidence>
<evidence type="ECO:0000305" key="2"/>
<accession>A5VSN4</accession>
<keyword id="KW-0687">Ribonucleoprotein</keyword>
<keyword id="KW-0689">Ribosomal protein</keyword>
<feature type="chain" id="PRO_1000049641" description="Large ribosomal subunit protein bL19">
    <location>
        <begin position="1"/>
        <end position="145"/>
    </location>
</feature>